<comment type="function">
    <text evidence="1">DNA-dependent RNA polymerase catalyzes the transcription of DNA into RNA using the four ribonucleoside triphosphates as substrates.</text>
</comment>
<comment type="catalytic activity">
    <reaction evidence="1">
        <text>RNA(n) + a ribonucleoside 5'-triphosphate = RNA(n+1) + diphosphate</text>
        <dbReference type="Rhea" id="RHEA:21248"/>
        <dbReference type="Rhea" id="RHEA-COMP:14527"/>
        <dbReference type="Rhea" id="RHEA-COMP:17342"/>
        <dbReference type="ChEBI" id="CHEBI:33019"/>
        <dbReference type="ChEBI" id="CHEBI:61557"/>
        <dbReference type="ChEBI" id="CHEBI:140395"/>
        <dbReference type="EC" id="2.7.7.6"/>
    </reaction>
</comment>
<comment type="subunit">
    <text evidence="1">Homodimer. The RNAP catalytic core consists of 2 alpha, 1 beta, 1 beta' and 1 omega subunit. When a sigma factor is associated with the core the holoenzyme is formed, which can initiate transcription.</text>
</comment>
<comment type="domain">
    <text evidence="1">The N-terminal domain is essential for RNAP assembly and basal transcription, whereas the C-terminal domain is involved in interaction with transcriptional regulators and with upstream promoter elements.</text>
</comment>
<comment type="similarity">
    <text evidence="1">Belongs to the RNA polymerase alpha chain family.</text>
</comment>
<feature type="chain" id="PRO_0000175332" description="DNA-directed RNA polymerase subunit alpha">
    <location>
        <begin position="1"/>
        <end position="317"/>
    </location>
</feature>
<feature type="region of interest" description="Alpha N-terminal domain (alpha-NTD)" evidence="1">
    <location>
        <begin position="1"/>
        <end position="234"/>
    </location>
</feature>
<feature type="region of interest" description="Alpha C-terminal domain (alpha-CTD)" evidence="1">
    <location>
        <begin position="249"/>
        <end position="317"/>
    </location>
</feature>
<dbReference type="EC" id="2.7.7.6" evidence="1"/>
<dbReference type="EMBL" id="AE017263">
    <property type="protein sequence ID" value="AAT75506.1"/>
    <property type="molecule type" value="Genomic_DNA"/>
</dbReference>
<dbReference type="RefSeq" id="WP_011183047.1">
    <property type="nucleotide sequence ID" value="NC_006055.1"/>
</dbReference>
<dbReference type="RefSeq" id="YP_053390.1">
    <property type="nucleotide sequence ID" value="NC_006055.1"/>
</dbReference>
<dbReference type="SMR" id="Q6F1W7"/>
<dbReference type="STRING" id="265311.Mfl150"/>
<dbReference type="PaxDb" id="265311-Mfl150"/>
<dbReference type="EnsemblBacteria" id="AAT75506">
    <property type="protein sequence ID" value="AAT75506"/>
    <property type="gene ID" value="Mfl150"/>
</dbReference>
<dbReference type="GeneID" id="2898191"/>
<dbReference type="KEGG" id="mfl:Mfl150"/>
<dbReference type="PATRIC" id="fig|265311.5.peg.151"/>
<dbReference type="eggNOG" id="COG0202">
    <property type="taxonomic scope" value="Bacteria"/>
</dbReference>
<dbReference type="HOGENOM" id="CLU_053084_0_1_14"/>
<dbReference type="OrthoDB" id="9805706at2"/>
<dbReference type="Proteomes" id="UP000006647">
    <property type="component" value="Chromosome"/>
</dbReference>
<dbReference type="GO" id="GO:0005737">
    <property type="term" value="C:cytoplasm"/>
    <property type="evidence" value="ECO:0007669"/>
    <property type="project" value="UniProtKB-ARBA"/>
</dbReference>
<dbReference type="GO" id="GO:0000428">
    <property type="term" value="C:DNA-directed RNA polymerase complex"/>
    <property type="evidence" value="ECO:0007669"/>
    <property type="project" value="UniProtKB-KW"/>
</dbReference>
<dbReference type="GO" id="GO:0003677">
    <property type="term" value="F:DNA binding"/>
    <property type="evidence" value="ECO:0007669"/>
    <property type="project" value="UniProtKB-UniRule"/>
</dbReference>
<dbReference type="GO" id="GO:0003899">
    <property type="term" value="F:DNA-directed RNA polymerase activity"/>
    <property type="evidence" value="ECO:0007669"/>
    <property type="project" value="UniProtKB-UniRule"/>
</dbReference>
<dbReference type="GO" id="GO:0046983">
    <property type="term" value="F:protein dimerization activity"/>
    <property type="evidence" value="ECO:0007669"/>
    <property type="project" value="InterPro"/>
</dbReference>
<dbReference type="GO" id="GO:0006351">
    <property type="term" value="P:DNA-templated transcription"/>
    <property type="evidence" value="ECO:0007669"/>
    <property type="project" value="UniProtKB-UniRule"/>
</dbReference>
<dbReference type="CDD" id="cd06928">
    <property type="entry name" value="RNAP_alpha_NTD"/>
    <property type="match status" value="1"/>
</dbReference>
<dbReference type="Gene3D" id="1.10.150.20">
    <property type="entry name" value="5' to 3' exonuclease, C-terminal subdomain"/>
    <property type="match status" value="1"/>
</dbReference>
<dbReference type="Gene3D" id="2.170.120.12">
    <property type="entry name" value="DNA-directed RNA polymerase, insert domain"/>
    <property type="match status" value="1"/>
</dbReference>
<dbReference type="Gene3D" id="3.30.1360.10">
    <property type="entry name" value="RNA polymerase, RBP11-like subunit"/>
    <property type="match status" value="1"/>
</dbReference>
<dbReference type="HAMAP" id="MF_00059">
    <property type="entry name" value="RNApol_bact_RpoA"/>
    <property type="match status" value="1"/>
</dbReference>
<dbReference type="InterPro" id="IPR011262">
    <property type="entry name" value="DNA-dir_RNA_pol_insert"/>
</dbReference>
<dbReference type="InterPro" id="IPR011263">
    <property type="entry name" value="DNA-dir_RNA_pol_RpoA/D/Rpb3"/>
</dbReference>
<dbReference type="InterPro" id="IPR011773">
    <property type="entry name" value="DNA-dir_RpoA"/>
</dbReference>
<dbReference type="InterPro" id="IPR036603">
    <property type="entry name" value="RBP11-like"/>
</dbReference>
<dbReference type="InterPro" id="IPR011260">
    <property type="entry name" value="RNAP_asu_C"/>
</dbReference>
<dbReference type="InterPro" id="IPR036643">
    <property type="entry name" value="RNApol_insert_sf"/>
</dbReference>
<dbReference type="NCBIfam" id="NF003519">
    <property type="entry name" value="PRK05182.2-5"/>
    <property type="match status" value="1"/>
</dbReference>
<dbReference type="NCBIfam" id="TIGR02027">
    <property type="entry name" value="rpoA"/>
    <property type="match status" value="1"/>
</dbReference>
<dbReference type="Pfam" id="PF01000">
    <property type="entry name" value="RNA_pol_A_bac"/>
    <property type="match status" value="1"/>
</dbReference>
<dbReference type="Pfam" id="PF03118">
    <property type="entry name" value="RNA_pol_A_CTD"/>
    <property type="match status" value="1"/>
</dbReference>
<dbReference type="Pfam" id="PF01193">
    <property type="entry name" value="RNA_pol_L"/>
    <property type="match status" value="1"/>
</dbReference>
<dbReference type="SMART" id="SM00662">
    <property type="entry name" value="RPOLD"/>
    <property type="match status" value="1"/>
</dbReference>
<dbReference type="SUPFAM" id="SSF47789">
    <property type="entry name" value="C-terminal domain of RNA polymerase alpha subunit"/>
    <property type="match status" value="1"/>
</dbReference>
<dbReference type="SUPFAM" id="SSF56553">
    <property type="entry name" value="Insert subdomain of RNA polymerase alpha subunit"/>
    <property type="match status" value="1"/>
</dbReference>
<dbReference type="SUPFAM" id="SSF55257">
    <property type="entry name" value="RBP11-like subunits of RNA polymerase"/>
    <property type="match status" value="1"/>
</dbReference>
<evidence type="ECO:0000255" key="1">
    <source>
        <dbReference type="HAMAP-Rule" id="MF_00059"/>
    </source>
</evidence>
<protein>
    <recommendedName>
        <fullName evidence="1">DNA-directed RNA polymerase subunit alpha</fullName>
        <shortName evidence="1">RNAP subunit alpha</shortName>
        <ecNumber evidence="1">2.7.7.6</ecNumber>
    </recommendedName>
    <alternativeName>
        <fullName evidence="1">RNA polymerase subunit alpha</fullName>
    </alternativeName>
    <alternativeName>
        <fullName evidence="1">Transcriptase subunit alpha</fullName>
    </alternativeName>
</protein>
<reference key="1">
    <citation type="submission" date="2004-06" db="EMBL/GenBank/DDBJ databases">
        <authorList>
            <person name="Birren B.W."/>
            <person name="Stange-Thomann N."/>
            <person name="Hafez N."/>
            <person name="DeCaprio D."/>
            <person name="Fisher S."/>
            <person name="Butler J."/>
            <person name="Elkins T."/>
            <person name="Kodira C.D."/>
            <person name="Major J."/>
            <person name="Wang S."/>
            <person name="Nicol R."/>
            <person name="Nusbaum C."/>
        </authorList>
    </citation>
    <scope>NUCLEOTIDE SEQUENCE [LARGE SCALE GENOMIC DNA]</scope>
    <source>
        <strain>ATCC 33453 / NBRC 100688 / NCTC 11704 / L1</strain>
    </source>
</reference>
<name>RPOA_MESFL</name>
<accession>Q6F1W7</accession>
<keyword id="KW-0240">DNA-directed RNA polymerase</keyword>
<keyword id="KW-0548">Nucleotidyltransferase</keyword>
<keyword id="KW-1185">Reference proteome</keyword>
<keyword id="KW-0804">Transcription</keyword>
<keyword id="KW-0808">Transferase</keyword>
<proteinExistence type="inferred from homology"/>
<gene>
    <name evidence="1" type="primary">rpoA</name>
    <name type="ordered locus">Mfl150</name>
</gene>
<organism>
    <name type="scientific">Mesoplasma florum (strain ATCC 33453 / NBRC 100688 / NCTC 11704 / L1)</name>
    <name type="common">Acholeplasma florum</name>
    <dbReference type="NCBI Taxonomy" id="265311"/>
    <lineage>
        <taxon>Bacteria</taxon>
        <taxon>Bacillati</taxon>
        <taxon>Mycoplasmatota</taxon>
        <taxon>Mollicutes</taxon>
        <taxon>Entomoplasmatales</taxon>
        <taxon>Entomoplasmataceae</taxon>
        <taxon>Mesoplasma</taxon>
    </lineage>
</organism>
<sequence>MKQFNKPEFGIVKESPNKFYGKFEAAPLERGFAVTLGNALRRTLLSSTPGASVFAIKIAGAQHEFTSISGIEENVTRIVLNVKKLILRIDSAIYNDDETVELKVGTSTIGPVTAGSLVLPAGVEVLNKDLVIANVAEGGNLDLVLYAKNSRGYKTFKENKELKDVVPGMITIDSNYSPIIKVAYGSTPINLGKAQDFEKLILEVETDGSILASDAVSLASKILISHFDVFTTLAEEVEEVAIMGVETVEEKELDKPVEELEFTQRSLNCLKRAGISTLRELVSKTEDEIQDIRNLGRKSLKEIKDKVAALELTFKQN</sequence>